<gene>
    <name type="ORF">SELMODRAFT_437438</name>
</gene>
<dbReference type="EMBL" id="GL377565">
    <property type="protein sequence ID" value="EFJ38523.1"/>
    <property type="molecule type" value="Genomic_DNA"/>
</dbReference>
<dbReference type="SMR" id="D8QQW9"/>
<dbReference type="STRING" id="88036.D8QQW9"/>
<dbReference type="EnsemblPlants" id="EFJ38523">
    <property type="protein sequence ID" value="EFJ38523"/>
    <property type="gene ID" value="SELMODRAFT_437438"/>
</dbReference>
<dbReference type="Gramene" id="EFJ38523">
    <property type="protein sequence ID" value="EFJ38523"/>
    <property type="gene ID" value="SELMODRAFT_437438"/>
</dbReference>
<dbReference type="KEGG" id="smo:SELMODRAFT_437438"/>
<dbReference type="eggNOG" id="ENOG502SF1Y">
    <property type="taxonomic scope" value="Eukaryota"/>
</dbReference>
<dbReference type="HOGENOM" id="CLU_1477516_0_0_1"/>
<dbReference type="InParanoid" id="D8QQW9"/>
<dbReference type="OMA" id="FCMVISS"/>
<dbReference type="OrthoDB" id="1924823at2759"/>
<dbReference type="Proteomes" id="UP000001514">
    <property type="component" value="Unassembled WGS sequence"/>
</dbReference>
<dbReference type="GO" id="GO:0005886">
    <property type="term" value="C:plasma membrane"/>
    <property type="evidence" value="ECO:0007669"/>
    <property type="project" value="UniProtKB-SubCell"/>
</dbReference>
<dbReference type="InterPro" id="IPR006702">
    <property type="entry name" value="CASP_dom"/>
</dbReference>
<dbReference type="PANTHER" id="PTHR33573:SF50">
    <property type="entry name" value="CASP-LIKE PROTEIN 4A3"/>
    <property type="match status" value="1"/>
</dbReference>
<dbReference type="PANTHER" id="PTHR33573">
    <property type="entry name" value="CASP-LIKE PROTEIN 4A4"/>
    <property type="match status" value="1"/>
</dbReference>
<dbReference type="Pfam" id="PF04535">
    <property type="entry name" value="CASP_dom"/>
    <property type="match status" value="1"/>
</dbReference>
<organism>
    <name type="scientific">Selaginella moellendorffii</name>
    <name type="common">Spikemoss</name>
    <dbReference type="NCBI Taxonomy" id="88036"/>
    <lineage>
        <taxon>Eukaryota</taxon>
        <taxon>Viridiplantae</taxon>
        <taxon>Streptophyta</taxon>
        <taxon>Embryophyta</taxon>
        <taxon>Tracheophyta</taxon>
        <taxon>Lycopodiopsida</taxon>
        <taxon>Selaginellales</taxon>
        <taxon>Selaginellaceae</taxon>
        <taxon>Selaginella</taxon>
    </lineage>
</organism>
<evidence type="ECO:0000250" key="1"/>
<evidence type="ECO:0000255" key="2"/>
<evidence type="ECO:0000305" key="3"/>
<protein>
    <recommendedName>
        <fullName>CASP-like protein UU1</fullName>
        <shortName>SmCASPLUU1</shortName>
    </recommendedName>
</protein>
<proteinExistence type="inferred from homology"/>
<keyword id="KW-1003">Cell membrane</keyword>
<keyword id="KW-0325">Glycoprotein</keyword>
<keyword id="KW-0472">Membrane</keyword>
<keyword id="KW-1185">Reference proteome</keyword>
<keyword id="KW-0812">Transmembrane</keyword>
<keyword id="KW-1133">Transmembrane helix</keyword>
<accession>D8QQW9</accession>
<comment type="subunit">
    <text evidence="1">Homodimer and heterodimers.</text>
</comment>
<comment type="subcellular location">
    <subcellularLocation>
        <location evidence="1">Cell membrane</location>
        <topology evidence="1">Multi-pass membrane protein</topology>
    </subcellularLocation>
</comment>
<comment type="similarity">
    <text evidence="3">Belongs to the Casparian strip membrane proteins (CASP) family.</text>
</comment>
<name>CSPLB_SELML</name>
<sequence>MEESQQQSTKFDAPPSPYVPSRVYLAQIYWKKPAIVVLRVLQFVFSLIAFSVMADLLHDVQGSIKSLSYTVAIGVLACAYALAQLSFSLWCVIRGATSSSGVTPLYQYATFICDQMSTYFLISAASATATLIDVSGVCGSNGSGTNLCSRSTASVTFAFLAFLAFSASSVLTGYYLVKCILKA</sequence>
<reference key="1">
    <citation type="journal article" date="2011" name="Science">
        <title>The Selaginella genome identifies genetic changes associated with the evolution of vascular plants.</title>
        <authorList>
            <person name="Banks J.A."/>
            <person name="Nishiyama T."/>
            <person name="Hasebe M."/>
            <person name="Bowman J.L."/>
            <person name="Gribskov M."/>
            <person name="dePamphilis C."/>
            <person name="Albert V.A."/>
            <person name="Aono N."/>
            <person name="Aoyama T."/>
            <person name="Ambrose B.A."/>
            <person name="Ashton N.W."/>
            <person name="Axtell M.J."/>
            <person name="Barker E."/>
            <person name="Barker M.S."/>
            <person name="Bennetzen J.L."/>
            <person name="Bonawitz N.D."/>
            <person name="Chapple C."/>
            <person name="Cheng C."/>
            <person name="Correa L.G."/>
            <person name="Dacre M."/>
            <person name="DeBarry J."/>
            <person name="Dreyer I."/>
            <person name="Elias M."/>
            <person name="Engstrom E.M."/>
            <person name="Estelle M."/>
            <person name="Feng L."/>
            <person name="Finet C."/>
            <person name="Floyd S.K."/>
            <person name="Frommer W.B."/>
            <person name="Fujita T."/>
            <person name="Gramzow L."/>
            <person name="Gutensohn M."/>
            <person name="Harholt J."/>
            <person name="Hattori M."/>
            <person name="Heyl A."/>
            <person name="Hirai T."/>
            <person name="Hiwatashi Y."/>
            <person name="Ishikawa M."/>
            <person name="Iwata M."/>
            <person name="Karol K.G."/>
            <person name="Koehler B."/>
            <person name="Kolukisaoglu U."/>
            <person name="Kubo M."/>
            <person name="Kurata T."/>
            <person name="Lalonde S."/>
            <person name="Li K."/>
            <person name="Li Y."/>
            <person name="Litt A."/>
            <person name="Lyons E."/>
            <person name="Manning G."/>
            <person name="Maruyama T."/>
            <person name="Michael T.P."/>
            <person name="Mikami K."/>
            <person name="Miyazaki S."/>
            <person name="Morinaga S."/>
            <person name="Murata T."/>
            <person name="Mueller-Roeber B."/>
            <person name="Nelson D.R."/>
            <person name="Obara M."/>
            <person name="Oguri Y."/>
            <person name="Olmstead R.G."/>
            <person name="Onodera N."/>
            <person name="Petersen B.L."/>
            <person name="Pils B."/>
            <person name="Prigge M."/>
            <person name="Rensing S.A."/>
            <person name="Riano-Pachon D.M."/>
            <person name="Roberts A.W."/>
            <person name="Sato Y."/>
            <person name="Scheller H.V."/>
            <person name="Schulz B."/>
            <person name="Schulz C."/>
            <person name="Shakirov E.V."/>
            <person name="Shibagaki N."/>
            <person name="Shinohara N."/>
            <person name="Shippen D.E."/>
            <person name="Soerensen I."/>
            <person name="Sotooka R."/>
            <person name="Sugimoto N."/>
            <person name="Sugita M."/>
            <person name="Sumikawa N."/>
            <person name="Tanurdzic M."/>
            <person name="Theissen G."/>
            <person name="Ulvskov P."/>
            <person name="Wakazuki S."/>
            <person name="Weng J.K."/>
            <person name="Willats W.W."/>
            <person name="Wipf D."/>
            <person name="Wolf P.G."/>
            <person name="Yang L."/>
            <person name="Zimmer A.D."/>
            <person name="Zhu Q."/>
            <person name="Mitros T."/>
            <person name="Hellsten U."/>
            <person name="Loque D."/>
            <person name="Otillar R."/>
            <person name="Salamov A."/>
            <person name="Schmutz J."/>
            <person name="Shapiro H."/>
            <person name="Lindquist E."/>
            <person name="Lucas S."/>
            <person name="Rokhsar D."/>
            <person name="Grigoriev I.V."/>
        </authorList>
    </citation>
    <scope>NUCLEOTIDE SEQUENCE [LARGE SCALE GENOMIC DNA]</scope>
</reference>
<reference key="2">
    <citation type="journal article" date="2014" name="Plant Physiol.">
        <title>Functional and evolutionary analysis of the CASPARIAN STRIP MEMBRANE DOMAIN PROTEIN family.</title>
        <authorList>
            <person name="Roppolo D."/>
            <person name="Boeckmann B."/>
            <person name="Pfister A."/>
            <person name="Boutet E."/>
            <person name="Rubio M.C."/>
            <person name="Denervaud-Tendon V."/>
            <person name="Vermeer J.E."/>
            <person name="Gheyselinck J."/>
            <person name="Xenarios I."/>
            <person name="Geldner N."/>
        </authorList>
    </citation>
    <scope>GENE FAMILY</scope>
    <scope>NOMENCLATURE</scope>
</reference>
<feature type="chain" id="PRO_0000418676" description="CASP-like protein UU1">
    <location>
        <begin position="1"/>
        <end position="183"/>
    </location>
</feature>
<feature type="topological domain" description="Cytoplasmic" evidence="2">
    <location>
        <begin position="1"/>
        <end position="33"/>
    </location>
</feature>
<feature type="transmembrane region" description="Helical" evidence="2">
    <location>
        <begin position="34"/>
        <end position="54"/>
    </location>
</feature>
<feature type="topological domain" description="Extracellular" evidence="2">
    <location>
        <begin position="55"/>
        <end position="72"/>
    </location>
</feature>
<feature type="transmembrane region" description="Helical" evidence="2">
    <location>
        <begin position="73"/>
        <end position="93"/>
    </location>
</feature>
<feature type="topological domain" description="Cytoplasmic" evidence="2">
    <location>
        <begin position="94"/>
        <end position="118"/>
    </location>
</feature>
<feature type="transmembrane region" description="Helical" evidence="2">
    <location>
        <begin position="119"/>
        <end position="139"/>
    </location>
</feature>
<feature type="topological domain" description="Extracellular" evidence="2">
    <location>
        <begin position="140"/>
        <end position="156"/>
    </location>
</feature>
<feature type="transmembrane region" description="Helical" evidence="2">
    <location>
        <begin position="157"/>
        <end position="177"/>
    </location>
</feature>
<feature type="topological domain" description="Cytoplasmic" evidence="2">
    <location>
        <begin position="178"/>
        <end position="183"/>
    </location>
</feature>
<feature type="glycosylation site" description="N-linked (GlcNAc...) asparagine" evidence="2">
    <location>
        <position position="141"/>
    </location>
</feature>